<reference key="1">
    <citation type="journal article" date="2001" name="Science">
        <title>Comparative genomics of Listeria species.</title>
        <authorList>
            <person name="Glaser P."/>
            <person name="Frangeul L."/>
            <person name="Buchrieser C."/>
            <person name="Rusniok C."/>
            <person name="Amend A."/>
            <person name="Baquero F."/>
            <person name="Berche P."/>
            <person name="Bloecker H."/>
            <person name="Brandt P."/>
            <person name="Chakraborty T."/>
            <person name="Charbit A."/>
            <person name="Chetouani F."/>
            <person name="Couve E."/>
            <person name="de Daruvar A."/>
            <person name="Dehoux P."/>
            <person name="Domann E."/>
            <person name="Dominguez-Bernal G."/>
            <person name="Duchaud E."/>
            <person name="Durant L."/>
            <person name="Dussurget O."/>
            <person name="Entian K.-D."/>
            <person name="Fsihi H."/>
            <person name="Garcia-del Portillo F."/>
            <person name="Garrido P."/>
            <person name="Gautier L."/>
            <person name="Goebel W."/>
            <person name="Gomez-Lopez N."/>
            <person name="Hain T."/>
            <person name="Hauf J."/>
            <person name="Jackson D."/>
            <person name="Jones L.-M."/>
            <person name="Kaerst U."/>
            <person name="Kreft J."/>
            <person name="Kuhn M."/>
            <person name="Kunst F."/>
            <person name="Kurapkat G."/>
            <person name="Madueno E."/>
            <person name="Maitournam A."/>
            <person name="Mata Vicente J."/>
            <person name="Ng E."/>
            <person name="Nedjari H."/>
            <person name="Nordsiek G."/>
            <person name="Novella S."/>
            <person name="de Pablos B."/>
            <person name="Perez-Diaz J.-C."/>
            <person name="Purcell R."/>
            <person name="Remmel B."/>
            <person name="Rose M."/>
            <person name="Schlueter T."/>
            <person name="Simoes N."/>
            <person name="Tierrez A."/>
            <person name="Vazquez-Boland J.-A."/>
            <person name="Voss H."/>
            <person name="Wehland J."/>
            <person name="Cossart P."/>
        </authorList>
    </citation>
    <scope>NUCLEOTIDE SEQUENCE [LARGE SCALE GENOMIC DNA]</scope>
    <source>
        <strain>ATCC BAA-679 / EGD-e</strain>
    </source>
</reference>
<keyword id="KW-1185">Reference proteome</keyword>
<organism>
    <name type="scientific">Listeria monocytogenes serovar 1/2a (strain ATCC BAA-679 / EGD-e)</name>
    <dbReference type="NCBI Taxonomy" id="169963"/>
    <lineage>
        <taxon>Bacteria</taxon>
        <taxon>Bacillati</taxon>
        <taxon>Bacillota</taxon>
        <taxon>Bacilli</taxon>
        <taxon>Bacillales</taxon>
        <taxon>Listeriaceae</taxon>
        <taxon>Listeria</taxon>
    </lineage>
</organism>
<comment type="similarity">
    <text evidence="1">Belongs to the UPF0354 family.</text>
</comment>
<sequence>MAKMTTLKMKERLEKELQAPNRQFSYNRDNDALTVVQSGKKVTLAIPQIIANYENDGDAAVEKIVYYVEEGFRAAAGNVELENNKANVYPVVRATSFPGETKAGEVLLTDDHTAETKIFYAVDLGKSYRFIEESMLKKAQLTHEEIREAAFNNLANLEIPLKKDSVNGNDFYFVRTNDGYDASRLLNEAFLREMREKLTGEMVLAVPHQDVLIIGDIQDNTGYDVLAHMTMDFFADGLVPITSLPFVYNNGKLEPIFIMAKNRLKE</sequence>
<feature type="chain" id="PRO_0000171104" description="UPF0354 protein lmo1608">
    <location>
        <begin position="1"/>
        <end position="266"/>
    </location>
</feature>
<accession>Q8Y6S5</accession>
<evidence type="ECO:0000255" key="1">
    <source>
        <dbReference type="HAMAP-Rule" id="MF_01548"/>
    </source>
</evidence>
<dbReference type="EMBL" id="AL591980">
    <property type="protein sequence ID" value="CAC99686.1"/>
    <property type="molecule type" value="Genomic_DNA"/>
</dbReference>
<dbReference type="PIR" id="AH1275">
    <property type="entry name" value="AH1275"/>
</dbReference>
<dbReference type="RefSeq" id="NP_465133.1">
    <property type="nucleotide sequence ID" value="NC_003210.1"/>
</dbReference>
<dbReference type="RefSeq" id="WP_003732542.1">
    <property type="nucleotide sequence ID" value="NZ_CP149495.1"/>
</dbReference>
<dbReference type="STRING" id="169963.gene:17594265"/>
<dbReference type="PaxDb" id="169963-lmo1608"/>
<dbReference type="EnsemblBacteria" id="CAC99686">
    <property type="protein sequence ID" value="CAC99686"/>
    <property type="gene ID" value="CAC99686"/>
</dbReference>
<dbReference type="GeneID" id="986017"/>
<dbReference type="KEGG" id="lmo:lmo1608"/>
<dbReference type="PATRIC" id="fig|169963.11.peg.1651"/>
<dbReference type="eggNOG" id="COG4848">
    <property type="taxonomic scope" value="Bacteria"/>
</dbReference>
<dbReference type="HOGENOM" id="CLU_085634_0_0_9"/>
<dbReference type="OrthoDB" id="154553at2"/>
<dbReference type="PhylomeDB" id="Q8Y6S5"/>
<dbReference type="BioCyc" id="LMON169963:LMO1608-MONOMER"/>
<dbReference type="Proteomes" id="UP000000817">
    <property type="component" value="Chromosome"/>
</dbReference>
<dbReference type="HAMAP" id="MF_01548">
    <property type="entry name" value="UPF0354"/>
    <property type="match status" value="1"/>
</dbReference>
<dbReference type="InterPro" id="IPR010838">
    <property type="entry name" value="DUF1444"/>
</dbReference>
<dbReference type="NCBIfam" id="NF010189">
    <property type="entry name" value="PRK13668.1"/>
    <property type="match status" value="1"/>
</dbReference>
<dbReference type="Pfam" id="PF07285">
    <property type="entry name" value="DUF1444"/>
    <property type="match status" value="1"/>
</dbReference>
<dbReference type="PIRSF" id="PIRSF012562">
    <property type="entry name" value="UCP012562"/>
    <property type="match status" value="1"/>
</dbReference>
<protein>
    <recommendedName>
        <fullName evidence="1">UPF0354 protein lmo1608</fullName>
    </recommendedName>
</protein>
<gene>
    <name type="ordered locus">lmo1608</name>
</gene>
<name>Y1608_LISMO</name>
<proteinExistence type="inferred from homology"/>